<protein>
    <recommendedName>
        <fullName>Protein SUPPRESSOR OF GENE SILENCING 3 homolog</fullName>
        <shortName>OsSGS3</shortName>
    </recommendedName>
</protein>
<feature type="chain" id="PRO_0000333291" description="Protein SUPPRESSOR OF GENE SILENCING 3 homolog">
    <location>
        <begin position="1"/>
        <end position="609"/>
    </location>
</feature>
<feature type="region of interest" description="Disordered" evidence="3">
    <location>
        <begin position="1"/>
        <end position="102"/>
    </location>
</feature>
<feature type="region of interest" description="Disordered" evidence="3">
    <location>
        <begin position="116"/>
        <end position="174"/>
    </location>
</feature>
<feature type="coiled-coil region" evidence="2">
    <location>
        <begin position="420"/>
        <end position="473"/>
    </location>
</feature>
<feature type="coiled-coil region" evidence="2">
    <location>
        <begin position="545"/>
        <end position="584"/>
    </location>
</feature>
<feature type="compositionally biased region" description="Gly residues" evidence="3">
    <location>
        <begin position="10"/>
        <end position="24"/>
    </location>
</feature>
<feature type="compositionally biased region" description="Low complexity" evidence="3">
    <location>
        <begin position="49"/>
        <end position="58"/>
    </location>
</feature>
<feature type="compositionally biased region" description="Acidic residues" evidence="3">
    <location>
        <begin position="138"/>
        <end position="168"/>
    </location>
</feature>
<evidence type="ECO:0000250" key="1"/>
<evidence type="ECO:0000255" key="2"/>
<evidence type="ECO:0000256" key="3">
    <source>
        <dbReference type="SAM" id="MobiDB-lite"/>
    </source>
</evidence>
<evidence type="ECO:0000305" key="4"/>
<reference key="1">
    <citation type="journal article" date="2005" name="BMC Biol.">
        <title>The sequence of rice chromosomes 11 and 12, rich in disease resistance genes and recent gene duplications.</title>
        <authorList>
            <consortium name="The rice chromosomes 11 and 12 sequencing consortia"/>
        </authorList>
    </citation>
    <scope>NUCLEOTIDE SEQUENCE [LARGE SCALE GENOMIC DNA]</scope>
    <source>
        <strain>cv. Nipponbare</strain>
    </source>
</reference>
<reference key="2">
    <citation type="journal article" date="2005" name="Nature">
        <title>The map-based sequence of the rice genome.</title>
        <authorList>
            <consortium name="International rice genome sequencing project (IRGSP)"/>
        </authorList>
    </citation>
    <scope>NUCLEOTIDE SEQUENCE [LARGE SCALE GENOMIC DNA]</scope>
    <source>
        <strain>cv. Nipponbare</strain>
    </source>
</reference>
<reference key="3">
    <citation type="journal article" date="2008" name="Nucleic Acids Res.">
        <title>The rice annotation project database (RAP-DB): 2008 update.</title>
        <authorList>
            <consortium name="The rice annotation project (RAP)"/>
        </authorList>
    </citation>
    <scope>GENOME REANNOTATION</scope>
    <source>
        <strain>cv. Nipponbare</strain>
    </source>
</reference>
<reference key="4">
    <citation type="journal article" date="2013" name="Rice">
        <title>Improvement of the Oryza sativa Nipponbare reference genome using next generation sequence and optical map data.</title>
        <authorList>
            <person name="Kawahara Y."/>
            <person name="de la Bastide M."/>
            <person name="Hamilton J.P."/>
            <person name="Kanamori H."/>
            <person name="McCombie W.R."/>
            <person name="Ouyang S."/>
            <person name="Schwartz D.C."/>
            <person name="Tanaka T."/>
            <person name="Wu J."/>
            <person name="Zhou S."/>
            <person name="Childs K.L."/>
            <person name="Davidson R.M."/>
            <person name="Lin H."/>
            <person name="Quesada-Ocampo L."/>
            <person name="Vaillancourt B."/>
            <person name="Sakai H."/>
            <person name="Lee S.S."/>
            <person name="Kim J."/>
            <person name="Numa H."/>
            <person name="Itoh T."/>
            <person name="Buell C.R."/>
            <person name="Matsumoto T."/>
        </authorList>
    </citation>
    <scope>GENOME REANNOTATION</scope>
    <source>
        <strain>cv. Nipponbare</strain>
    </source>
</reference>
<reference key="5">
    <citation type="journal article" date="2005" name="PLoS Biol.">
        <title>The genomes of Oryza sativa: a history of duplications.</title>
        <authorList>
            <person name="Yu J."/>
            <person name="Wang J."/>
            <person name="Lin W."/>
            <person name="Li S."/>
            <person name="Li H."/>
            <person name="Zhou J."/>
            <person name="Ni P."/>
            <person name="Dong W."/>
            <person name="Hu S."/>
            <person name="Zeng C."/>
            <person name="Zhang J."/>
            <person name="Zhang Y."/>
            <person name="Li R."/>
            <person name="Xu Z."/>
            <person name="Li S."/>
            <person name="Li X."/>
            <person name="Zheng H."/>
            <person name="Cong L."/>
            <person name="Lin L."/>
            <person name="Yin J."/>
            <person name="Geng J."/>
            <person name="Li G."/>
            <person name="Shi J."/>
            <person name="Liu J."/>
            <person name="Lv H."/>
            <person name="Li J."/>
            <person name="Wang J."/>
            <person name="Deng Y."/>
            <person name="Ran L."/>
            <person name="Shi X."/>
            <person name="Wang X."/>
            <person name="Wu Q."/>
            <person name="Li C."/>
            <person name="Ren X."/>
            <person name="Wang J."/>
            <person name="Wang X."/>
            <person name="Li D."/>
            <person name="Liu D."/>
            <person name="Zhang X."/>
            <person name="Ji Z."/>
            <person name="Zhao W."/>
            <person name="Sun Y."/>
            <person name="Zhang Z."/>
            <person name="Bao J."/>
            <person name="Han Y."/>
            <person name="Dong L."/>
            <person name="Ji J."/>
            <person name="Chen P."/>
            <person name="Wu S."/>
            <person name="Liu J."/>
            <person name="Xiao Y."/>
            <person name="Bu D."/>
            <person name="Tan J."/>
            <person name="Yang L."/>
            <person name="Ye C."/>
            <person name="Zhang J."/>
            <person name="Xu J."/>
            <person name="Zhou Y."/>
            <person name="Yu Y."/>
            <person name="Zhang B."/>
            <person name="Zhuang S."/>
            <person name="Wei H."/>
            <person name="Liu B."/>
            <person name="Lei M."/>
            <person name="Yu H."/>
            <person name="Li Y."/>
            <person name="Xu H."/>
            <person name="Wei S."/>
            <person name="He X."/>
            <person name="Fang L."/>
            <person name="Zhang Z."/>
            <person name="Zhang Y."/>
            <person name="Huang X."/>
            <person name="Su Z."/>
            <person name="Tong W."/>
            <person name="Li J."/>
            <person name="Tong Z."/>
            <person name="Li S."/>
            <person name="Ye J."/>
            <person name="Wang L."/>
            <person name="Fang L."/>
            <person name="Lei T."/>
            <person name="Chen C.-S."/>
            <person name="Chen H.-C."/>
            <person name="Xu Z."/>
            <person name="Li H."/>
            <person name="Huang H."/>
            <person name="Zhang F."/>
            <person name="Xu H."/>
            <person name="Li N."/>
            <person name="Zhao C."/>
            <person name="Li S."/>
            <person name="Dong L."/>
            <person name="Huang Y."/>
            <person name="Li L."/>
            <person name="Xi Y."/>
            <person name="Qi Q."/>
            <person name="Li W."/>
            <person name="Zhang B."/>
            <person name="Hu W."/>
            <person name="Zhang Y."/>
            <person name="Tian X."/>
            <person name="Jiao Y."/>
            <person name="Liang X."/>
            <person name="Jin J."/>
            <person name="Gao L."/>
            <person name="Zheng W."/>
            <person name="Hao B."/>
            <person name="Liu S.-M."/>
            <person name="Wang W."/>
            <person name="Yuan L."/>
            <person name="Cao M."/>
            <person name="McDermott J."/>
            <person name="Samudrala R."/>
            <person name="Wang J."/>
            <person name="Wong G.K.-S."/>
            <person name="Yang H."/>
        </authorList>
    </citation>
    <scope>NUCLEOTIDE SEQUENCE [LARGE SCALE GENOMIC DNA]</scope>
    <source>
        <strain>cv. Nipponbare</strain>
    </source>
</reference>
<dbReference type="EMBL" id="DP000011">
    <property type="protein sequence ID" value="ABA96655.1"/>
    <property type="molecule type" value="Genomic_DNA"/>
</dbReference>
<dbReference type="EMBL" id="AP008218">
    <property type="protein sequence ID" value="BAF29379.1"/>
    <property type="molecule type" value="Genomic_DNA"/>
</dbReference>
<dbReference type="EMBL" id="AP014968">
    <property type="protein sequence ID" value="BAT16246.1"/>
    <property type="molecule type" value="Genomic_DNA"/>
</dbReference>
<dbReference type="EMBL" id="CM000149">
    <property type="protein sequence ID" value="EAZ19932.1"/>
    <property type="status" value="ALT_SEQ"/>
    <property type="molecule type" value="Genomic_DNA"/>
</dbReference>
<dbReference type="RefSeq" id="XP_015620650.1">
    <property type="nucleotide sequence ID" value="XM_015765164.1"/>
</dbReference>
<dbReference type="SMR" id="Q2QWE9"/>
<dbReference type="FunCoup" id="Q2QWE9">
    <property type="interactions" value="1337"/>
</dbReference>
<dbReference type="STRING" id="39947.Q2QWE9"/>
<dbReference type="PaxDb" id="39947-Q2QWE9"/>
<dbReference type="EnsemblPlants" id="Os12t0197500-01">
    <property type="protein sequence ID" value="Os12t0197500-01"/>
    <property type="gene ID" value="Os12g0197500"/>
</dbReference>
<dbReference type="Gramene" id="Os12t0197500-01">
    <property type="protein sequence ID" value="Os12t0197500-01"/>
    <property type="gene ID" value="Os12g0197500"/>
</dbReference>
<dbReference type="KEGG" id="dosa:Os12g0197500"/>
<dbReference type="eggNOG" id="ENOG502QPU5">
    <property type="taxonomic scope" value="Eukaryota"/>
</dbReference>
<dbReference type="InParanoid" id="Q2QWE9"/>
<dbReference type="OMA" id="DWYNLQP"/>
<dbReference type="OrthoDB" id="1936239at2759"/>
<dbReference type="Proteomes" id="UP000000763">
    <property type="component" value="Chromosome 12"/>
</dbReference>
<dbReference type="Proteomes" id="UP000007752">
    <property type="component" value="Chromosome 12"/>
</dbReference>
<dbReference type="Proteomes" id="UP000059680">
    <property type="component" value="Chromosome 12"/>
</dbReference>
<dbReference type="ExpressionAtlas" id="Q2QWE9">
    <property type="expression patterns" value="baseline and differential"/>
</dbReference>
<dbReference type="GO" id="GO:0005737">
    <property type="term" value="C:cytoplasm"/>
    <property type="evidence" value="ECO:0007669"/>
    <property type="project" value="UniProtKB-SubCell"/>
</dbReference>
<dbReference type="GO" id="GO:0051607">
    <property type="term" value="P:defense response to virus"/>
    <property type="evidence" value="ECO:0007669"/>
    <property type="project" value="InterPro"/>
</dbReference>
<dbReference type="GO" id="GO:0050688">
    <property type="term" value="P:regulation of defense response to virus"/>
    <property type="evidence" value="ECO:0007669"/>
    <property type="project" value="UniProtKB-KW"/>
</dbReference>
<dbReference type="GO" id="GO:0031047">
    <property type="term" value="P:regulatory ncRNA-mediated gene silencing"/>
    <property type="evidence" value="ECO:0007669"/>
    <property type="project" value="UniProtKB-KW"/>
</dbReference>
<dbReference type="CDD" id="cd12266">
    <property type="entry name" value="RRM_like_XS"/>
    <property type="match status" value="1"/>
</dbReference>
<dbReference type="Gene3D" id="3.30.70.2890">
    <property type="entry name" value="XS domain"/>
    <property type="match status" value="1"/>
</dbReference>
<dbReference type="InterPro" id="IPR044287">
    <property type="entry name" value="SGS3"/>
</dbReference>
<dbReference type="InterPro" id="IPR005380">
    <property type="entry name" value="XS_domain"/>
</dbReference>
<dbReference type="InterPro" id="IPR038588">
    <property type="entry name" value="XS_domain_sf"/>
</dbReference>
<dbReference type="InterPro" id="IPR005381">
    <property type="entry name" value="Znf-XS_domain"/>
</dbReference>
<dbReference type="PANTHER" id="PTHR46602">
    <property type="entry name" value="PROTEIN SUPPRESSOR OF GENE SILENCING 3"/>
    <property type="match status" value="1"/>
</dbReference>
<dbReference type="PANTHER" id="PTHR46602:SF1">
    <property type="entry name" value="PROTEIN SUPPRESSOR OF GENE SILENCING 3"/>
    <property type="match status" value="1"/>
</dbReference>
<dbReference type="Pfam" id="PF03468">
    <property type="entry name" value="XS"/>
    <property type="match status" value="1"/>
</dbReference>
<dbReference type="Pfam" id="PF03470">
    <property type="entry name" value="zf-XS"/>
    <property type="match status" value="1"/>
</dbReference>
<sequence length="609" mass="69444">MASAGDRRGGGGPPGSGDDSGGGWETVEKRVKKPAQQVGKGQWGQWNSPNAAPAPTAPRSGSGAFHHSGNTLVRHSDRRPARGTPRPPPQNRSIEAELQAPHGVVTAPLANGWQWGARSCPPGTESKEGGLPLSGCDPETDNAEGYDTSDDDNDDDMSDDLSDDYDSDASEKSFETRKNHKLFKGFFEVLEALSVEQLNEPTRQWHCPACKNGPGAIDWYKGLQPLMTHAKTKGSIKVKRHRELASLLEEELSRRGTSVVPSGEQFRKWKGLRESTDREIVWPPMVVVMNTVLEQDEDDKWKGMGNQELIDYFSEYAASKARHAYGPNGHRGMSVLIFDSSAVGYMEAERLHDHFVRQRTDRNTWNSAHKVTFLPGGKRQLYGFLATKDDMETFNRHCHGKSRLKYEMRSYNEMVVTQMKQMSEDNQQLNYLKNKMVKKEQHSKLVEDTLSVVTQKLRETMEENTIVRNKAKEKHLEYEKEMKYQEEFFHDQIEKIHKATEEKEIKFEKLLQEERAKARQSDVDSGSTEDRRQRKEKIQNFIDCQVKDVEEFEAERDKLIKLHEEKKVKLKKEYLAKEFELEKELDTALTSLMDKHKPDIFKSSTSPST</sequence>
<accession>Q2QWE9</accession>
<accession>A0A0P0Y7V7</accession>
<accession>A3CFR9</accession>
<comment type="function">
    <text evidence="1">Required for post-transcriptional gene silencing and natural virus resistance.</text>
</comment>
<comment type="subcellular location">
    <subcellularLocation>
        <location evidence="1">Cytoplasm</location>
    </subcellularLocation>
</comment>
<comment type="similarity">
    <text evidence="4">Belongs to the SGS3 family.</text>
</comment>
<comment type="sequence caution" evidence="4">
    <conflict type="erroneous gene model prediction">
        <sequence resource="EMBL-CDS" id="EAZ19932"/>
    </conflict>
</comment>
<keyword id="KW-0930">Antiviral protein</keyword>
<keyword id="KW-0175">Coiled coil</keyword>
<keyword id="KW-0963">Cytoplasm</keyword>
<keyword id="KW-1185">Reference proteome</keyword>
<keyword id="KW-0943">RNA-mediated gene silencing</keyword>
<name>SGS3_ORYSJ</name>
<proteinExistence type="inferred from homology"/>
<gene>
    <name type="primary">SGS3</name>
    <name type="ordered locus">Os12g0197500</name>
    <name type="ordered locus">LOC_Os12g09580</name>
    <name type="ORF">OsJ_034141</name>
</gene>
<organism>
    <name type="scientific">Oryza sativa subsp. japonica</name>
    <name type="common">Rice</name>
    <dbReference type="NCBI Taxonomy" id="39947"/>
    <lineage>
        <taxon>Eukaryota</taxon>
        <taxon>Viridiplantae</taxon>
        <taxon>Streptophyta</taxon>
        <taxon>Embryophyta</taxon>
        <taxon>Tracheophyta</taxon>
        <taxon>Spermatophyta</taxon>
        <taxon>Magnoliopsida</taxon>
        <taxon>Liliopsida</taxon>
        <taxon>Poales</taxon>
        <taxon>Poaceae</taxon>
        <taxon>BOP clade</taxon>
        <taxon>Oryzoideae</taxon>
        <taxon>Oryzeae</taxon>
        <taxon>Oryzinae</taxon>
        <taxon>Oryza</taxon>
        <taxon>Oryza sativa</taxon>
    </lineage>
</organism>